<organism>
    <name type="scientific">Acidithiobacillus ferrooxidans (strain ATCC 23270 / DSM 14882 / CIP 104768 / NCIMB 8455)</name>
    <name type="common">Ferrobacillus ferrooxidans (strain ATCC 23270)</name>
    <dbReference type="NCBI Taxonomy" id="243159"/>
    <lineage>
        <taxon>Bacteria</taxon>
        <taxon>Pseudomonadati</taxon>
        <taxon>Pseudomonadota</taxon>
        <taxon>Acidithiobacillia</taxon>
        <taxon>Acidithiobacillales</taxon>
        <taxon>Acidithiobacillaceae</taxon>
        <taxon>Acidithiobacillus</taxon>
    </lineage>
</organism>
<feature type="chain" id="PRO_0000430825" description="Sulfide-quinone reductase">
    <location>
        <begin position="1"/>
        <end position="434"/>
    </location>
</feature>
<feature type="active site" description="Cysteine persulfide intermediate" evidence="1 2">
    <location>
        <position position="160"/>
    </location>
</feature>
<feature type="active site" description="Cysteine persulfide intermediate" evidence="1 2">
    <location>
        <position position="356"/>
    </location>
</feature>
<feature type="binding site" evidence="1 2">
    <location>
        <begin position="8"/>
        <end position="12"/>
    </location>
    <ligand>
        <name>FAD</name>
        <dbReference type="ChEBI" id="CHEBI:57692"/>
    </ligand>
</feature>
<feature type="binding site" evidence="1 2">
    <location>
        <begin position="34"/>
        <end position="35"/>
    </location>
    <ligand>
        <name>FAD</name>
        <dbReference type="ChEBI" id="CHEBI:57692"/>
    </ligand>
</feature>
<feature type="binding site" evidence="1 2">
    <location>
        <begin position="77"/>
        <end position="78"/>
    </location>
    <ligand>
        <name>FAD</name>
        <dbReference type="ChEBI" id="CHEBI:57692"/>
    </ligand>
</feature>
<feature type="binding site" evidence="1 2">
    <location>
        <position position="302"/>
    </location>
    <ligand>
        <name>FAD</name>
        <dbReference type="ChEBI" id="CHEBI:57692"/>
    </ligand>
</feature>
<feature type="binding site" evidence="1 2">
    <location>
        <position position="322"/>
    </location>
    <ligand>
        <name>FAD</name>
        <dbReference type="ChEBI" id="CHEBI:57692"/>
    </ligand>
</feature>
<feature type="binding site" evidence="1 2">
    <location>
        <position position="391"/>
    </location>
    <ligand>
        <name>FAD</name>
        <dbReference type="ChEBI" id="CHEBI:57692"/>
    </ligand>
</feature>
<feature type="mutagenesis site" description="No effect on FAD reduction. Strongly reduced activity with decylubiquinone." evidence="2">
    <original>S</original>
    <variation>A</variation>
    <location>
        <position position="126"/>
    </location>
</feature>
<feature type="mutagenesis site" description="No effect on FAD reduction. Strongly reduced activity with decylubiquinone." evidence="1 2">
    <original>C</original>
    <variation>A</variation>
    <location>
        <position position="128"/>
    </location>
</feature>
<feature type="mutagenesis site" description="No effect on FAD reduction. Abolishes activity with decylubiquinone." evidence="2">
    <original>C</original>
    <variation>S</variation>
    <location>
        <position position="128"/>
    </location>
</feature>
<feature type="mutagenesis site" description="No effect on FAD reduction. Reduced activity with decylubiquinone." evidence="2">
    <original>H</original>
    <variation>A</variation>
    <location>
        <position position="132"/>
    </location>
</feature>
<feature type="mutagenesis site" description="Strongly reduces FAD reduction. Abolishes activity with decylubiquinone." evidence="1 2">
    <original>C</original>
    <variation>A</variation>
    <location>
        <position position="160"/>
    </location>
</feature>
<feature type="mutagenesis site" description="No effect on FAD reduction. Reduced activity with decylubiquinone." evidence="2">
    <original>H</original>
    <variation>A</variation>
    <location>
        <position position="198"/>
    </location>
</feature>
<feature type="mutagenesis site" description="Complete loss of enzyme activity. Abolishes enzyme FAD reduction. Abolishes activity with decylubiquinone." evidence="1 2">
    <original>C</original>
    <variation>A</variation>
    <location>
        <position position="356"/>
    </location>
</feature>
<feature type="strand" evidence="6">
    <location>
        <begin position="3"/>
        <end position="7"/>
    </location>
</feature>
<feature type="helix" evidence="6">
    <location>
        <begin position="13"/>
        <end position="24"/>
    </location>
</feature>
<feature type="helix" evidence="6">
    <location>
        <begin position="25"/>
        <end position="27"/>
    </location>
</feature>
<feature type="strand" evidence="6">
    <location>
        <begin position="28"/>
        <end position="33"/>
    </location>
</feature>
<feature type="strand" evidence="6">
    <location>
        <begin position="35"/>
        <end position="40"/>
    </location>
</feature>
<feature type="helix" evidence="6">
    <location>
        <begin position="42"/>
        <end position="44"/>
    </location>
</feature>
<feature type="helix" evidence="6">
    <location>
        <begin position="45"/>
        <end position="49"/>
    </location>
</feature>
<feature type="helix" evidence="6">
    <location>
        <begin position="55"/>
        <end position="58"/>
    </location>
</feature>
<feature type="strand" evidence="6">
    <location>
        <begin position="59"/>
        <end position="61"/>
    </location>
</feature>
<feature type="helix" evidence="6">
    <location>
        <begin position="63"/>
        <end position="67"/>
    </location>
</feature>
<feature type="turn" evidence="6">
    <location>
        <begin position="68"/>
        <end position="70"/>
    </location>
</feature>
<feature type="strand" evidence="6">
    <location>
        <begin position="72"/>
        <end position="74"/>
    </location>
</feature>
<feature type="strand" evidence="6">
    <location>
        <begin position="78"/>
        <end position="82"/>
    </location>
</feature>
<feature type="turn" evidence="6">
    <location>
        <begin position="83"/>
        <end position="86"/>
    </location>
</feature>
<feature type="strand" evidence="6">
    <location>
        <begin position="87"/>
        <end position="90"/>
    </location>
</feature>
<feature type="strand" evidence="6">
    <location>
        <begin position="95"/>
        <end position="97"/>
    </location>
</feature>
<feature type="strand" evidence="6">
    <location>
        <begin position="99"/>
        <end position="103"/>
    </location>
</feature>
<feature type="strand" evidence="8">
    <location>
        <begin position="107"/>
        <end position="109"/>
    </location>
</feature>
<feature type="helix" evidence="6">
    <location>
        <begin position="111"/>
        <end position="113"/>
    </location>
</feature>
<feature type="turn" evidence="6">
    <location>
        <begin position="119"/>
        <end position="121"/>
    </location>
</feature>
<feature type="strand" evidence="6">
    <location>
        <begin position="122"/>
        <end position="125"/>
    </location>
</feature>
<feature type="helix" evidence="6">
    <location>
        <begin position="130"/>
        <end position="145"/>
    </location>
</feature>
<feature type="strand" evidence="6">
    <location>
        <begin position="150"/>
        <end position="154"/>
    </location>
</feature>
<feature type="helix" evidence="6">
    <location>
        <begin position="162"/>
        <end position="177"/>
    </location>
</feature>
<feature type="helix" evidence="6">
    <location>
        <begin position="181"/>
        <end position="183"/>
    </location>
</feature>
<feature type="strand" evidence="6">
    <location>
        <begin position="187"/>
        <end position="195"/>
    </location>
</feature>
<feature type="turn" evidence="6">
    <location>
        <begin position="199"/>
        <end position="202"/>
    </location>
</feature>
<feature type="helix" evidence="6">
    <location>
        <begin position="207"/>
        <end position="217"/>
    </location>
</feature>
<feature type="strand" evidence="6">
    <location>
        <begin position="221"/>
        <end position="223"/>
    </location>
</feature>
<feature type="strand" evidence="6">
    <location>
        <begin position="225"/>
        <end position="232"/>
    </location>
</feature>
<feature type="strand" evidence="6">
    <location>
        <begin position="235"/>
        <end position="241"/>
    </location>
</feature>
<feature type="strand" evidence="6">
    <location>
        <begin position="247"/>
        <end position="254"/>
    </location>
</feature>
<feature type="strand" evidence="6">
    <location>
        <begin position="256"/>
        <end position="261"/>
    </location>
</feature>
<feature type="strand" evidence="8">
    <location>
        <begin position="264"/>
        <end position="266"/>
    </location>
</feature>
<feature type="helix" evidence="6">
    <location>
        <begin position="268"/>
        <end position="271"/>
    </location>
</feature>
<feature type="turn" evidence="6">
    <location>
        <begin position="274"/>
        <end position="276"/>
    </location>
</feature>
<feature type="strand" evidence="6">
    <location>
        <begin position="289"/>
        <end position="293"/>
    </location>
</feature>
<feature type="strand" evidence="6">
    <location>
        <begin position="297"/>
        <end position="299"/>
    </location>
</feature>
<feature type="helix" evidence="6">
    <location>
        <begin position="301"/>
        <end position="303"/>
    </location>
</feature>
<feature type="helix" evidence="6">
    <location>
        <begin position="322"/>
        <end position="339"/>
    </location>
</feature>
<feature type="turn" evidence="6">
    <location>
        <begin position="340"/>
        <end position="342"/>
    </location>
</feature>
<feature type="strand" evidence="6">
    <location>
        <begin position="354"/>
        <end position="359"/>
    </location>
</feature>
<feature type="strand" evidence="6">
    <location>
        <begin position="364"/>
        <end position="375"/>
    </location>
</feature>
<feature type="strand" evidence="6">
    <location>
        <begin position="377"/>
        <end position="384"/>
    </location>
</feature>
<feature type="helix" evidence="6">
    <location>
        <begin position="385"/>
        <end position="404"/>
    </location>
</feature>
<feature type="strand" evidence="7">
    <location>
        <begin position="408"/>
        <end position="410"/>
    </location>
</feature>
<feature type="helix" evidence="6">
    <location>
        <begin position="413"/>
        <end position="416"/>
    </location>
</feature>
<feature type="turn" evidence="9">
    <location>
        <begin position="423"/>
        <end position="426"/>
    </location>
</feature>
<accession>B7JBP8</accession>
<keyword id="KW-0002">3D-structure</keyword>
<keyword id="KW-0274">FAD</keyword>
<keyword id="KW-0285">Flavoprotein</keyword>
<keyword id="KW-0472">Membrane</keyword>
<keyword id="KW-0547">Nucleotide-binding</keyword>
<keyword id="KW-0560">Oxidoreductase</keyword>
<keyword id="KW-0874">Quinone</keyword>
<keyword id="KW-1185">Reference proteome</keyword>
<sequence length="434" mass="47406">MAHVVILGAGTGGMPAAYEMKEALGSGHEVTLISANDYFQFVPSNPWVGVGWKERDDIAFPIRHYVERKGIHFIAQSAEQIDAEAQNITLADGNTVHYDYLMIATGPKLAFENVPGSDPHEGPVQSICTVDHAERAFAEYQALLREPGPIVIGAMAGASCFGPAYEYAMIVASDLKKRGMRDKIPSFTFITSEPYIGHLGIQGVGDSKGILTKGLKEEGIEAYTNCKVTKVEDNKMYVTQVDEKGETIKEMVLPVKFGMMIPAFKGVPAVAGVEGLCNPGGFVLVDEHQRSKKYANIFAAGIAIAIPPVETTPVPTGAPKTGYMIESMVSAAVHNIKADLEGRKGEQTMGTWNAVCFADMGDRGAAFIALPQLKPRKVDVFAYGRWVHLAKVAFEKYFIRKMKMGVSEPFYEKVLFKMMGITRLKEEDTHRKAS</sequence>
<proteinExistence type="evidence at protein level"/>
<comment type="function">
    <text evidence="1 2">Catalyzes the oxidation of hydrogen sulfide, with the help of a quinone. Consecutive reaction cycles lead to the accumulation of a polysulfide product on the active site Cys residues; these products are released when they exceed a critical length, typically as cyclooctasulfur.</text>
</comment>
<comment type="catalytic activity">
    <reaction evidence="1 2">
        <text>n a quinone + n hydrogen sulfide + n H(+) = polysulfur(n-2) + n a quinol</text>
        <dbReference type="Rhea" id="RHEA:30239"/>
        <dbReference type="Rhea" id="RHEA-COMP:19475"/>
        <dbReference type="ChEBI" id="CHEBI:15378"/>
        <dbReference type="ChEBI" id="CHEBI:17909"/>
        <dbReference type="ChEBI" id="CHEBI:24646"/>
        <dbReference type="ChEBI" id="CHEBI:29919"/>
        <dbReference type="ChEBI" id="CHEBI:132124"/>
        <dbReference type="EC" id="1.8.5.4"/>
    </reaction>
</comment>
<comment type="cofactor">
    <cofactor evidence="1 2">
        <name>FAD</name>
        <dbReference type="ChEBI" id="CHEBI:57692"/>
    </cofactor>
    <text evidence="1 2">Binds 1 FAD per subunit.</text>
</comment>
<comment type="biophysicochemical properties">
    <kinetics>
        <KM evidence="1">2.8 uM for sodium sulfide</KM>
        <KM evidence="1">22 uM for decylubiquinone</KM>
    </kinetics>
</comment>
<comment type="subunit">
    <text evidence="1">Homodimer.</text>
</comment>
<comment type="subcellular location">
    <subcellularLocation>
        <location evidence="3">Membrane</location>
        <topology evidence="3">Peripheral membrane protein</topology>
    </subcellularLocation>
</comment>
<comment type="similarity">
    <text evidence="4">Belongs to the SQRD family.</text>
</comment>
<evidence type="ECO:0000269" key="1">
    <source>
    </source>
</evidence>
<evidence type="ECO:0000269" key="2">
    <source>
    </source>
</evidence>
<evidence type="ECO:0000303" key="3">
    <source>
    </source>
</evidence>
<evidence type="ECO:0000305" key="4"/>
<evidence type="ECO:0000312" key="5">
    <source>
        <dbReference type="EMBL" id="ACK80359.1"/>
    </source>
</evidence>
<evidence type="ECO:0007829" key="6">
    <source>
        <dbReference type="PDB" id="3SX6"/>
    </source>
</evidence>
<evidence type="ECO:0007829" key="7">
    <source>
        <dbReference type="PDB" id="3SY4"/>
    </source>
</evidence>
<evidence type="ECO:0007829" key="8">
    <source>
        <dbReference type="PDB" id="3T0K"/>
    </source>
</evidence>
<evidence type="ECO:0007829" key="9">
    <source>
        <dbReference type="PDB" id="3T2Z"/>
    </source>
</evidence>
<protein>
    <recommendedName>
        <fullName>Sulfide-quinone reductase</fullName>
        <shortName>SQR</shortName>
        <ecNumber evidence="1 2">1.8.5.4</ecNumber>
    </recommendedName>
    <alternativeName>
        <fullName>Sulfide:quinone oxidoreductase</fullName>
    </alternativeName>
</protein>
<gene>
    <name evidence="5" type="ordered locus">AFE_1792</name>
</gene>
<reference key="1">
    <citation type="journal article" date="2008" name="BMC Genomics">
        <title>Acidithiobacillus ferrooxidans metabolism: from genome sequence to industrial applications.</title>
        <authorList>
            <person name="Valdes J."/>
            <person name="Pedroso I."/>
            <person name="Quatrini R."/>
            <person name="Dodson R.J."/>
            <person name="Tettelin H."/>
            <person name="Blake R. II"/>
            <person name="Eisen J.A."/>
            <person name="Holmes D.S."/>
        </authorList>
    </citation>
    <scope>NUCLEOTIDE SEQUENCE [LARGE SCALE GENOMIC DNA]</scope>
    <source>
        <strain>ATCC 23270 / DSM 14882 / CIP 104768 / NCIMB 8455</strain>
    </source>
</reference>
<reference key="2">
    <citation type="journal article" date="2010" name="J. Mol. Biol.">
        <title>Crystal structure of sulfide:quinone oxidoreductase from Acidithiobacillus ferrooxidans: insights into sulfidotrophic respiration and detoxification.</title>
        <authorList>
            <person name="Cherney M.M."/>
            <person name="Zhang Y."/>
            <person name="Solomonson M."/>
            <person name="Weiner J.H."/>
            <person name="James M.N."/>
        </authorList>
    </citation>
    <scope>X-RAY CRYSTALLOGRAPHY (2.05 ANGSTROMS) IN COMPLEX WITH FAD; UBIQUINONE AND HYDROGEN SULFIDE</scope>
    <scope>FUNCTION</scope>
    <scope>CATALYTIC ACTIVITY</scope>
    <scope>ACTIVE SITE</scope>
    <scope>COFACTOR</scope>
    <scope>SUBCELLULAR LOCATION</scope>
    <scope>SUBUNIT</scope>
    <scope>BIOPHYSICOCHEMICAL PROPERTIES</scope>
    <scope>MUTAGENESIS OF CYS-128; CYS-160 AND CYS-356</scope>
</reference>
<reference key="3">
    <citation type="journal article" date="2012" name="J. Struct. Biol.">
        <title>Structure-activity characterization of sulfide:quinone oxidoreductase variants.</title>
        <authorList>
            <person name="Cherney M.M."/>
            <person name="Zhang Y."/>
            <person name="James M.N."/>
            <person name="Weiner J.H."/>
        </authorList>
    </citation>
    <scope>X-RAY CRYSTALLOGRAPHY (1.80 ANGSTROMS) OF 2-434 IN COMPLEX WITH FAD; UBIQUINONE AND HYDROGEN SULFIDE</scope>
    <scope>ACTIVE SITE</scope>
    <scope>MUTAGENESIS OF SER-126; CYS-128; HIS-132; CYS-160; HIS-198 AND CYS-356</scope>
</reference>
<name>SQRD_ACIF2</name>
<dbReference type="EC" id="1.8.5.4" evidence="1 2"/>
<dbReference type="EMBL" id="CP001219">
    <property type="protein sequence ID" value="ACK80359.1"/>
    <property type="molecule type" value="Genomic_DNA"/>
</dbReference>
<dbReference type="RefSeq" id="WP_012536761.1">
    <property type="nucleotide sequence ID" value="NC_011761.1"/>
</dbReference>
<dbReference type="PDB" id="3KPK">
    <property type="method" value="X-ray"/>
    <property type="resolution" value="2.05 A"/>
    <property type="chains" value="A=1-434"/>
</dbReference>
<dbReference type="PDB" id="3SX6">
    <property type="method" value="X-ray"/>
    <property type="resolution" value="1.80 A"/>
    <property type="chains" value="A=2-434"/>
</dbReference>
<dbReference type="PDB" id="3SXI">
    <property type="method" value="X-ray"/>
    <property type="resolution" value="2.18 A"/>
    <property type="chains" value="A=2-434"/>
</dbReference>
<dbReference type="PDB" id="3SY4">
    <property type="method" value="X-ray"/>
    <property type="resolution" value="1.91 A"/>
    <property type="chains" value="A=2-434"/>
</dbReference>
<dbReference type="PDB" id="3SYI">
    <property type="method" value="X-ray"/>
    <property type="resolution" value="2.20 A"/>
    <property type="chains" value="A=2-434"/>
</dbReference>
<dbReference type="PDB" id="3SZ0">
    <property type="method" value="X-ray"/>
    <property type="resolution" value="2.15 A"/>
    <property type="chains" value="A=2-434"/>
</dbReference>
<dbReference type="PDB" id="3SZC">
    <property type="method" value="X-ray"/>
    <property type="resolution" value="2.20 A"/>
    <property type="chains" value="A=2-434"/>
</dbReference>
<dbReference type="PDB" id="3SZF">
    <property type="method" value="X-ray"/>
    <property type="resolution" value="2.10 A"/>
    <property type="chains" value="A=2-434"/>
</dbReference>
<dbReference type="PDB" id="3SZW">
    <property type="method" value="X-ray"/>
    <property type="resolution" value="2.20 A"/>
    <property type="chains" value="A=2-434"/>
</dbReference>
<dbReference type="PDB" id="3T0K">
    <property type="method" value="X-ray"/>
    <property type="resolution" value="2.00 A"/>
    <property type="chains" value="A=2-434"/>
</dbReference>
<dbReference type="PDB" id="3T14">
    <property type="method" value="X-ray"/>
    <property type="resolution" value="2.21 A"/>
    <property type="chains" value="A=2-434"/>
</dbReference>
<dbReference type="PDB" id="3T2K">
    <property type="method" value="X-ray"/>
    <property type="resolution" value="2.35 A"/>
    <property type="chains" value="A=2-434"/>
</dbReference>
<dbReference type="PDB" id="3T2Y">
    <property type="method" value="X-ray"/>
    <property type="resolution" value="2.50 A"/>
    <property type="chains" value="A=1-434"/>
</dbReference>
<dbReference type="PDB" id="3T2Z">
    <property type="method" value="X-ray"/>
    <property type="resolution" value="2.30 A"/>
    <property type="chains" value="A/B=2-434"/>
</dbReference>
<dbReference type="PDB" id="3T31">
    <property type="method" value="X-ray"/>
    <property type="resolution" value="2.30 A"/>
    <property type="chains" value="A=2-434"/>
</dbReference>
<dbReference type="PDBsum" id="3KPK"/>
<dbReference type="PDBsum" id="3SX6"/>
<dbReference type="PDBsum" id="3SXI"/>
<dbReference type="PDBsum" id="3SY4"/>
<dbReference type="PDBsum" id="3SYI"/>
<dbReference type="PDBsum" id="3SZ0"/>
<dbReference type="PDBsum" id="3SZC"/>
<dbReference type="PDBsum" id="3SZF"/>
<dbReference type="PDBsum" id="3SZW"/>
<dbReference type="PDBsum" id="3T0K"/>
<dbReference type="PDBsum" id="3T14"/>
<dbReference type="PDBsum" id="3T2K"/>
<dbReference type="PDBsum" id="3T2Y"/>
<dbReference type="PDBsum" id="3T2Z"/>
<dbReference type="PDBsum" id="3T31"/>
<dbReference type="SMR" id="B7JBP8"/>
<dbReference type="STRING" id="243159.AFE_1792"/>
<dbReference type="DrugBank" id="DB07640">
    <property type="generic name" value="2-decyl-5,6-dimethoxy-3-methylcyclohexa-2,5-diene-1,4-dione"/>
</dbReference>
<dbReference type="PaxDb" id="243159-AFE_1792"/>
<dbReference type="GeneID" id="65280961"/>
<dbReference type="KEGG" id="afr:AFE_1792"/>
<dbReference type="eggNOG" id="COG0446">
    <property type="taxonomic scope" value="Bacteria"/>
</dbReference>
<dbReference type="HOGENOM" id="CLU_030742_5_2_6"/>
<dbReference type="BRENDA" id="1.8.5.4">
    <property type="organism ID" value="91"/>
</dbReference>
<dbReference type="SABIO-RK" id="B7JBP8"/>
<dbReference type="EvolutionaryTrace" id="B7JBP8"/>
<dbReference type="Proteomes" id="UP000001362">
    <property type="component" value="Chromosome"/>
</dbReference>
<dbReference type="GO" id="GO:0016020">
    <property type="term" value="C:membrane"/>
    <property type="evidence" value="ECO:0007669"/>
    <property type="project" value="UniProtKB-SubCell"/>
</dbReference>
<dbReference type="GO" id="GO:0003955">
    <property type="term" value="F:NAD(P)H dehydrogenase (quinone) activity"/>
    <property type="evidence" value="ECO:0007669"/>
    <property type="project" value="TreeGrafter"/>
</dbReference>
<dbReference type="GO" id="GO:0000166">
    <property type="term" value="F:nucleotide binding"/>
    <property type="evidence" value="ECO:0007669"/>
    <property type="project" value="UniProtKB-KW"/>
</dbReference>
<dbReference type="GO" id="GO:0048038">
    <property type="term" value="F:quinone binding"/>
    <property type="evidence" value="ECO:0007669"/>
    <property type="project" value="UniProtKB-KW"/>
</dbReference>
<dbReference type="GO" id="GO:0070224">
    <property type="term" value="F:sulfide:quinone oxidoreductase activity"/>
    <property type="evidence" value="ECO:0007669"/>
    <property type="project" value="UniProtKB-EC"/>
</dbReference>
<dbReference type="GO" id="GO:0019646">
    <property type="term" value="P:aerobic electron transport chain"/>
    <property type="evidence" value="ECO:0007669"/>
    <property type="project" value="TreeGrafter"/>
</dbReference>
<dbReference type="FunFam" id="3.50.50.100:FF:000017">
    <property type="entry name" value="Sulfide-quinone reductase"/>
    <property type="match status" value="1"/>
</dbReference>
<dbReference type="Gene3D" id="3.50.50.100">
    <property type="match status" value="1"/>
</dbReference>
<dbReference type="InterPro" id="IPR036188">
    <property type="entry name" value="FAD/NAD-bd_sf"/>
</dbReference>
<dbReference type="InterPro" id="IPR023753">
    <property type="entry name" value="FAD/NAD-binding_dom"/>
</dbReference>
<dbReference type="InterPro" id="IPR051169">
    <property type="entry name" value="NADH-Q_oxidoreductase"/>
</dbReference>
<dbReference type="PANTHER" id="PTHR42913">
    <property type="entry name" value="APOPTOSIS-INDUCING FACTOR 1"/>
    <property type="match status" value="1"/>
</dbReference>
<dbReference type="PANTHER" id="PTHR42913:SF6">
    <property type="entry name" value="SULFIDE-QUINONE REDUCTASE"/>
    <property type="match status" value="1"/>
</dbReference>
<dbReference type="Pfam" id="PF07992">
    <property type="entry name" value="Pyr_redox_2"/>
    <property type="match status" value="1"/>
</dbReference>
<dbReference type="SUPFAM" id="SSF51905">
    <property type="entry name" value="FAD/NAD(P)-binding domain"/>
    <property type="match status" value="2"/>
</dbReference>